<reference key="1">
    <citation type="journal article" date="2003" name="Genome Res.">
        <title>Comparative genome analysis of Vibrio vulnificus, a marine pathogen.</title>
        <authorList>
            <person name="Chen C.-Y."/>
            <person name="Wu K.-M."/>
            <person name="Chang Y.-C."/>
            <person name="Chang C.-H."/>
            <person name="Tsai H.-C."/>
            <person name="Liao T.-L."/>
            <person name="Liu Y.-M."/>
            <person name="Chen H.-J."/>
            <person name="Shen A.B.-T."/>
            <person name="Li J.-C."/>
            <person name="Su T.-L."/>
            <person name="Shao C.-P."/>
            <person name="Lee C.-T."/>
            <person name="Hor L.-I."/>
            <person name="Tsai S.-F."/>
        </authorList>
    </citation>
    <scope>NUCLEOTIDE SEQUENCE [LARGE SCALE GENOMIC DNA]</scope>
    <source>
        <strain>YJ016</strain>
    </source>
</reference>
<protein>
    <recommendedName>
        <fullName evidence="1">Membrane protein insertase YidC</fullName>
    </recommendedName>
    <alternativeName>
        <fullName evidence="1">Foldase YidC</fullName>
    </alternativeName>
    <alternativeName>
        <fullName evidence="1">Membrane integrase YidC</fullName>
    </alternativeName>
    <alternativeName>
        <fullName evidence="1">Membrane protein YidC</fullName>
    </alternativeName>
</protein>
<proteinExistence type="inferred from homology"/>
<dbReference type="EMBL" id="BA000037">
    <property type="protein sequence ID" value="BAC92767.1"/>
    <property type="molecule type" value="Genomic_DNA"/>
</dbReference>
<dbReference type="RefSeq" id="WP_011149047.1">
    <property type="nucleotide sequence ID" value="NC_005139.1"/>
</dbReference>
<dbReference type="SMR" id="Q7MQK5"/>
<dbReference type="STRING" id="672.VV93_v1c30060"/>
<dbReference type="KEGG" id="vvy:VV0003"/>
<dbReference type="PATRIC" id="fig|196600.6.peg.57"/>
<dbReference type="eggNOG" id="COG0706">
    <property type="taxonomic scope" value="Bacteria"/>
</dbReference>
<dbReference type="HOGENOM" id="CLU_016535_3_0_6"/>
<dbReference type="Proteomes" id="UP000002675">
    <property type="component" value="Chromosome I"/>
</dbReference>
<dbReference type="GO" id="GO:0005886">
    <property type="term" value="C:plasma membrane"/>
    <property type="evidence" value="ECO:0007669"/>
    <property type="project" value="UniProtKB-SubCell"/>
</dbReference>
<dbReference type="GO" id="GO:0032977">
    <property type="term" value="F:membrane insertase activity"/>
    <property type="evidence" value="ECO:0007669"/>
    <property type="project" value="InterPro"/>
</dbReference>
<dbReference type="GO" id="GO:0051205">
    <property type="term" value="P:protein insertion into membrane"/>
    <property type="evidence" value="ECO:0007669"/>
    <property type="project" value="TreeGrafter"/>
</dbReference>
<dbReference type="GO" id="GO:0015031">
    <property type="term" value="P:protein transport"/>
    <property type="evidence" value="ECO:0007669"/>
    <property type="project" value="UniProtKB-KW"/>
</dbReference>
<dbReference type="CDD" id="cd20070">
    <property type="entry name" value="5TM_YidC_Alb3"/>
    <property type="match status" value="1"/>
</dbReference>
<dbReference type="CDD" id="cd19961">
    <property type="entry name" value="EcYidC-like_peri"/>
    <property type="match status" value="1"/>
</dbReference>
<dbReference type="Gene3D" id="2.70.98.90">
    <property type="match status" value="1"/>
</dbReference>
<dbReference type="HAMAP" id="MF_01810">
    <property type="entry name" value="YidC_type1"/>
    <property type="match status" value="1"/>
</dbReference>
<dbReference type="InterPro" id="IPR019998">
    <property type="entry name" value="Membr_insert_YidC"/>
</dbReference>
<dbReference type="InterPro" id="IPR028053">
    <property type="entry name" value="Membr_insert_YidC_N"/>
</dbReference>
<dbReference type="InterPro" id="IPR001708">
    <property type="entry name" value="YidC/ALB3/OXA1/COX18"/>
</dbReference>
<dbReference type="InterPro" id="IPR028055">
    <property type="entry name" value="YidC/Oxa/ALB_C"/>
</dbReference>
<dbReference type="InterPro" id="IPR047196">
    <property type="entry name" value="YidC_ALB_C"/>
</dbReference>
<dbReference type="InterPro" id="IPR038221">
    <property type="entry name" value="YidC_periplasmic_sf"/>
</dbReference>
<dbReference type="NCBIfam" id="NF002351">
    <property type="entry name" value="PRK01318.1-1"/>
    <property type="match status" value="1"/>
</dbReference>
<dbReference type="NCBIfam" id="NF002352">
    <property type="entry name" value="PRK01318.1-3"/>
    <property type="match status" value="1"/>
</dbReference>
<dbReference type="NCBIfam" id="TIGR03593">
    <property type="entry name" value="yidC_nterm"/>
    <property type="match status" value="1"/>
</dbReference>
<dbReference type="NCBIfam" id="TIGR03592">
    <property type="entry name" value="yidC_oxa1_cterm"/>
    <property type="match status" value="1"/>
</dbReference>
<dbReference type="PANTHER" id="PTHR12428:SF65">
    <property type="entry name" value="CYTOCHROME C OXIDASE ASSEMBLY PROTEIN COX18, MITOCHONDRIAL"/>
    <property type="match status" value="1"/>
</dbReference>
<dbReference type="PANTHER" id="PTHR12428">
    <property type="entry name" value="OXA1"/>
    <property type="match status" value="1"/>
</dbReference>
<dbReference type="Pfam" id="PF02096">
    <property type="entry name" value="60KD_IMP"/>
    <property type="match status" value="1"/>
</dbReference>
<dbReference type="Pfam" id="PF14849">
    <property type="entry name" value="YidC_periplas"/>
    <property type="match status" value="1"/>
</dbReference>
<dbReference type="PRINTS" id="PR00701">
    <property type="entry name" value="60KDINNERMP"/>
</dbReference>
<dbReference type="PRINTS" id="PR01900">
    <property type="entry name" value="YIDCPROTEIN"/>
</dbReference>
<accession>Q7MQK5</accession>
<feature type="chain" id="PRO_0000124768" description="Membrane protein insertase YidC">
    <location>
        <begin position="1"/>
        <end position="539"/>
    </location>
</feature>
<feature type="transmembrane region" description="Helical" evidence="1">
    <location>
        <begin position="6"/>
        <end position="26"/>
    </location>
</feature>
<feature type="transmembrane region" description="Helical" evidence="1">
    <location>
        <begin position="341"/>
        <end position="361"/>
    </location>
</feature>
<feature type="transmembrane region" description="Helical" evidence="1">
    <location>
        <begin position="416"/>
        <end position="436"/>
    </location>
</feature>
<feature type="transmembrane region" description="Helical" evidence="1">
    <location>
        <begin position="454"/>
        <end position="474"/>
    </location>
</feature>
<feature type="transmembrane region" description="Helical" evidence="1">
    <location>
        <begin position="495"/>
        <end position="515"/>
    </location>
</feature>
<keyword id="KW-0997">Cell inner membrane</keyword>
<keyword id="KW-1003">Cell membrane</keyword>
<keyword id="KW-0143">Chaperone</keyword>
<keyword id="KW-0472">Membrane</keyword>
<keyword id="KW-0653">Protein transport</keyword>
<keyword id="KW-0812">Transmembrane</keyword>
<keyword id="KW-1133">Transmembrane helix</keyword>
<keyword id="KW-0813">Transport</keyword>
<gene>
    <name evidence="1" type="primary">yidC</name>
    <name type="ordered locus">VV0003</name>
</gene>
<evidence type="ECO:0000255" key="1">
    <source>
        <dbReference type="HAMAP-Rule" id="MF_01810"/>
    </source>
</evidence>
<organism>
    <name type="scientific">Vibrio vulnificus (strain YJ016)</name>
    <dbReference type="NCBI Taxonomy" id="196600"/>
    <lineage>
        <taxon>Bacteria</taxon>
        <taxon>Pseudomonadati</taxon>
        <taxon>Pseudomonadota</taxon>
        <taxon>Gammaproteobacteria</taxon>
        <taxon>Vibrionales</taxon>
        <taxon>Vibrionaceae</taxon>
        <taxon>Vibrio</taxon>
    </lineage>
</organism>
<name>YIDC_VIBVY</name>
<comment type="function">
    <text evidence="1">Required for the insertion and/or proper folding and/or complex formation of integral membrane proteins into the membrane. Involved in integration of membrane proteins that insert both dependently and independently of the Sec translocase complex, as well as at least some lipoproteins. Aids folding of multispanning membrane proteins.</text>
</comment>
<comment type="subunit">
    <text evidence="1">Interacts with the Sec translocase complex via SecD. Specifically interacts with transmembrane segments of nascent integral membrane proteins during membrane integration.</text>
</comment>
<comment type="subcellular location">
    <subcellularLocation>
        <location evidence="1">Cell inner membrane</location>
        <topology evidence="1">Multi-pass membrane protein</topology>
    </subcellularLocation>
</comment>
<comment type="similarity">
    <text evidence="1">Belongs to the OXA1/ALB3/YidC family. Type 1 subfamily.</text>
</comment>
<sequence length="539" mass="60418">MDSQRTLLVLLLALVSFLLFQQWQVAKNPAPQAVEQAQTSSTLPAPSFADELDPAPAQQASAKLITVTTDVLTLSIDTVGGDVVAADLNQYSAELNSANAFELLRDTQGHQFIAQSGLVGPQGIDLSSNNRPSYQVSADSFTLADDQNELRIPMTYQANGLEYTKTFILKRGSYAIDVEFDVINKSGNNATLGMYAHLRQNLMDAGGSITMPTYRGGAYSTEDTRYKKYSFEDMQDRNLSLTLTNGQGWAAMIQHYFAAAWIPRNEPGANLYTRVIGNMGDIGVRMPNKTVADGDSAHFTATLWAGPKLQDQMAEVAPNLDLVVDYGWLWFIAKPLHWLLSVIQSFVGNWGVAIICLTFIVRGAMYPLTKAQYTSMAKMRMLQPKLQAMRERIGDDRQRMSQEMMELYKKEKVNPLGGCLPLILQMPIFIALYWALMESVELRHSPFILWIHDLSAQDPYFILPLLMGGSMFLIQKMSPTTVTDPMQQKIMTFMPVMFTFFFLWFPSGLVLYWLVSNIVTLIQQSLIYKALEKKGLHTK</sequence>